<organism>
    <name type="scientific">Escherichia fergusonii (strain ATCC 35469 / DSM 13698 / CCUG 18766 / IAM 14443 / JCM 21226 / LMG 7866 / NBRC 102419 / NCTC 12128 / CDC 0568-73)</name>
    <dbReference type="NCBI Taxonomy" id="585054"/>
    <lineage>
        <taxon>Bacteria</taxon>
        <taxon>Pseudomonadati</taxon>
        <taxon>Pseudomonadota</taxon>
        <taxon>Gammaproteobacteria</taxon>
        <taxon>Enterobacterales</taxon>
        <taxon>Enterobacteriaceae</taxon>
        <taxon>Escherichia</taxon>
    </lineage>
</organism>
<sequence length="196" mass="21157">MGYYAFERLIPVVHPTAFVHPSAVLIGDVIVGAGVYIGPLASLRGDYGRLIVQAGANIQDGCIMHGYCDTDTIVGENGHIGHGAILHGCVIGRDALVGMNSVIMDGAVIGEESIVAAMSFVKAGFSGEKRQLLMGTPARAVRSVSDDELRWKHLNTKEYQDLVGRCHVALHETQPLRQMEENRPRLQGTTDVAPKR</sequence>
<evidence type="ECO:0000255" key="1">
    <source>
        <dbReference type="HAMAP-Rule" id="MF_01525"/>
    </source>
</evidence>
<evidence type="ECO:0000256" key="2">
    <source>
        <dbReference type="SAM" id="MobiDB-lite"/>
    </source>
</evidence>
<protein>
    <recommendedName>
        <fullName evidence="1">Carnitine operon protein CaiE</fullName>
    </recommendedName>
</protein>
<gene>
    <name evidence="1" type="primary">caiE</name>
    <name type="ordered locus">EFER_0043</name>
</gene>
<reference key="1">
    <citation type="journal article" date="2009" name="PLoS Genet.">
        <title>Organised genome dynamics in the Escherichia coli species results in highly diverse adaptive paths.</title>
        <authorList>
            <person name="Touchon M."/>
            <person name="Hoede C."/>
            <person name="Tenaillon O."/>
            <person name="Barbe V."/>
            <person name="Baeriswyl S."/>
            <person name="Bidet P."/>
            <person name="Bingen E."/>
            <person name="Bonacorsi S."/>
            <person name="Bouchier C."/>
            <person name="Bouvet O."/>
            <person name="Calteau A."/>
            <person name="Chiapello H."/>
            <person name="Clermont O."/>
            <person name="Cruveiller S."/>
            <person name="Danchin A."/>
            <person name="Diard M."/>
            <person name="Dossat C."/>
            <person name="Karoui M.E."/>
            <person name="Frapy E."/>
            <person name="Garry L."/>
            <person name="Ghigo J.M."/>
            <person name="Gilles A.M."/>
            <person name="Johnson J."/>
            <person name="Le Bouguenec C."/>
            <person name="Lescat M."/>
            <person name="Mangenot S."/>
            <person name="Martinez-Jehanne V."/>
            <person name="Matic I."/>
            <person name="Nassif X."/>
            <person name="Oztas S."/>
            <person name="Petit M.A."/>
            <person name="Pichon C."/>
            <person name="Rouy Z."/>
            <person name="Ruf C.S."/>
            <person name="Schneider D."/>
            <person name="Tourret J."/>
            <person name="Vacherie B."/>
            <person name="Vallenet D."/>
            <person name="Medigue C."/>
            <person name="Rocha E.P.C."/>
            <person name="Denamur E."/>
        </authorList>
    </citation>
    <scope>NUCLEOTIDE SEQUENCE [LARGE SCALE GENOMIC DNA]</scope>
    <source>
        <strain>ATCC 35469 / DSM 13698 / BCRC 15582 / CCUG 18766 / IAM 14443 / JCM 21226 / LMG 7866 / NBRC 102419 / NCTC 12128 / CDC 0568-73</strain>
    </source>
</reference>
<dbReference type="EMBL" id="CU928158">
    <property type="protein sequence ID" value="CAQ87629.1"/>
    <property type="molecule type" value="Genomic_DNA"/>
</dbReference>
<dbReference type="RefSeq" id="WP_012599857.1">
    <property type="nucleotide sequence ID" value="NC_011740.1"/>
</dbReference>
<dbReference type="SMR" id="B7LWM6"/>
<dbReference type="GeneID" id="75058869"/>
<dbReference type="KEGG" id="efe:EFER_0043"/>
<dbReference type="HOGENOM" id="CLU_064827_4_2_6"/>
<dbReference type="OrthoDB" id="9803036at2"/>
<dbReference type="UniPathway" id="UPA00117"/>
<dbReference type="Proteomes" id="UP000000745">
    <property type="component" value="Chromosome"/>
</dbReference>
<dbReference type="GO" id="GO:0016740">
    <property type="term" value="F:transferase activity"/>
    <property type="evidence" value="ECO:0007669"/>
    <property type="project" value="UniProtKB-KW"/>
</dbReference>
<dbReference type="GO" id="GO:0009437">
    <property type="term" value="P:carnitine metabolic process"/>
    <property type="evidence" value="ECO:0007669"/>
    <property type="project" value="UniProtKB-UniRule"/>
</dbReference>
<dbReference type="CDD" id="cd04745">
    <property type="entry name" value="LbH_paaY_like"/>
    <property type="match status" value="1"/>
</dbReference>
<dbReference type="FunFam" id="2.160.10.10:FF:000012">
    <property type="entry name" value="Carnitine operon protein CaiE"/>
    <property type="match status" value="1"/>
</dbReference>
<dbReference type="Gene3D" id="2.160.10.10">
    <property type="entry name" value="Hexapeptide repeat proteins"/>
    <property type="match status" value="1"/>
</dbReference>
<dbReference type="HAMAP" id="MF_01525">
    <property type="entry name" value="CaiE"/>
    <property type="match status" value="1"/>
</dbReference>
<dbReference type="InterPro" id="IPR023446">
    <property type="entry name" value="CaiE"/>
</dbReference>
<dbReference type="InterPro" id="IPR001451">
    <property type="entry name" value="Hexapep"/>
</dbReference>
<dbReference type="InterPro" id="IPR050484">
    <property type="entry name" value="Transf_Hexapept/Carb_Anhydrase"/>
</dbReference>
<dbReference type="InterPro" id="IPR011004">
    <property type="entry name" value="Trimer_LpxA-like_sf"/>
</dbReference>
<dbReference type="NCBIfam" id="NF010150">
    <property type="entry name" value="PRK13627.1"/>
    <property type="match status" value="1"/>
</dbReference>
<dbReference type="PANTHER" id="PTHR13061">
    <property type="entry name" value="DYNACTIN SUBUNIT P25"/>
    <property type="match status" value="1"/>
</dbReference>
<dbReference type="PANTHER" id="PTHR13061:SF29">
    <property type="entry name" value="GAMMA CARBONIC ANHYDRASE-LIKE 1, MITOCHONDRIAL-RELATED"/>
    <property type="match status" value="1"/>
</dbReference>
<dbReference type="Pfam" id="PF00132">
    <property type="entry name" value="Hexapep"/>
    <property type="match status" value="1"/>
</dbReference>
<dbReference type="SUPFAM" id="SSF51161">
    <property type="entry name" value="Trimeric LpxA-like enzymes"/>
    <property type="match status" value="1"/>
</dbReference>
<feature type="chain" id="PRO_1000200929" description="Carnitine operon protein CaiE">
    <location>
        <begin position="1"/>
        <end position="196"/>
    </location>
</feature>
<feature type="region of interest" description="Disordered" evidence="2">
    <location>
        <begin position="176"/>
        <end position="196"/>
    </location>
</feature>
<comment type="function">
    <text evidence="1">Overproduction of CaiE stimulates the activity of CaiB and CaiD.</text>
</comment>
<comment type="pathway">
    <text evidence="1">Amine and polyamine metabolism; carnitine metabolism.</text>
</comment>
<comment type="similarity">
    <text evidence="1">Belongs to the transferase hexapeptide repeat family.</text>
</comment>
<proteinExistence type="inferred from homology"/>
<name>CAIE_ESCF3</name>
<keyword id="KW-0677">Repeat</keyword>
<keyword id="KW-0808">Transferase</keyword>
<accession>B7LWM6</accession>